<feature type="chain" id="PRO_0000172506" description="Uncharacterized transporter sll0640">
    <location>
        <begin position="1"/>
        <end position="612"/>
    </location>
</feature>
<feature type="transmembrane region" description="Helical" evidence="1">
    <location>
        <begin position="13"/>
        <end position="33"/>
    </location>
</feature>
<feature type="transmembrane region" description="Helical" evidence="1">
    <location>
        <begin position="38"/>
        <end position="58"/>
    </location>
</feature>
<feature type="transmembrane region" description="Helical" evidence="1">
    <location>
        <begin position="67"/>
        <end position="87"/>
    </location>
</feature>
<feature type="transmembrane region" description="Helical" evidence="1">
    <location>
        <begin position="107"/>
        <end position="127"/>
    </location>
</feature>
<feature type="transmembrane region" description="Helical" evidence="1">
    <location>
        <begin position="144"/>
        <end position="164"/>
    </location>
</feature>
<feature type="transmembrane region" description="Helical" evidence="1">
    <location>
        <begin position="189"/>
        <end position="209"/>
    </location>
</feature>
<feature type="transmembrane region" description="Helical" evidence="1">
    <location>
        <begin position="419"/>
        <end position="439"/>
    </location>
</feature>
<feature type="transmembrane region" description="Helical" evidence="1">
    <location>
        <begin position="459"/>
        <end position="479"/>
    </location>
</feature>
<feature type="transmembrane region" description="Helical" evidence="1">
    <location>
        <begin position="501"/>
        <end position="521"/>
    </location>
</feature>
<feature type="transmembrane region" description="Helical" evidence="1">
    <location>
        <begin position="525"/>
        <end position="545"/>
    </location>
</feature>
<feature type="transmembrane region" description="Helical" evidence="1">
    <location>
        <begin position="546"/>
        <end position="566"/>
    </location>
</feature>
<feature type="transmembrane region" description="Helical" evidence="1">
    <location>
        <begin position="586"/>
        <end position="606"/>
    </location>
</feature>
<feature type="domain" description="RCK C-terminal 1" evidence="2">
    <location>
        <begin position="218"/>
        <end position="302"/>
    </location>
</feature>
<feature type="domain" description="RCK C-terminal 2" evidence="2">
    <location>
        <begin position="316"/>
        <end position="403"/>
    </location>
</feature>
<dbReference type="EMBL" id="BA000022">
    <property type="protein sequence ID" value="BAA16976.1"/>
    <property type="molecule type" value="Genomic_DNA"/>
</dbReference>
<dbReference type="PIR" id="S74936">
    <property type="entry name" value="S74936"/>
</dbReference>
<dbReference type="SMR" id="P72958"/>
<dbReference type="IntAct" id="P72958">
    <property type="interactions" value="1"/>
</dbReference>
<dbReference type="STRING" id="1148.gene:10497836"/>
<dbReference type="TCDB" id="2.A.47.4.1">
    <property type="family name" value="the divalent anion:na(+) symporter (dass) family"/>
</dbReference>
<dbReference type="PaxDb" id="1148-1652051"/>
<dbReference type="EnsemblBacteria" id="BAA16976">
    <property type="protein sequence ID" value="BAA16976"/>
    <property type="gene ID" value="BAA16976"/>
</dbReference>
<dbReference type="KEGG" id="syn:sll0640"/>
<dbReference type="eggNOG" id="COG0471">
    <property type="taxonomic scope" value="Bacteria"/>
</dbReference>
<dbReference type="eggNOG" id="COG3273">
    <property type="taxonomic scope" value="Bacteria"/>
</dbReference>
<dbReference type="InParanoid" id="P72958"/>
<dbReference type="PhylomeDB" id="P72958"/>
<dbReference type="Proteomes" id="UP000001425">
    <property type="component" value="Chromosome"/>
</dbReference>
<dbReference type="GO" id="GO:0005886">
    <property type="term" value="C:plasma membrane"/>
    <property type="evidence" value="ECO:0000318"/>
    <property type="project" value="GO_Central"/>
</dbReference>
<dbReference type="GO" id="GO:0008324">
    <property type="term" value="F:monoatomic cation transmembrane transporter activity"/>
    <property type="evidence" value="ECO:0007669"/>
    <property type="project" value="InterPro"/>
</dbReference>
<dbReference type="GO" id="GO:0006813">
    <property type="term" value="P:potassium ion transport"/>
    <property type="evidence" value="ECO:0007669"/>
    <property type="project" value="InterPro"/>
</dbReference>
<dbReference type="Gene3D" id="3.30.70.1450">
    <property type="entry name" value="Regulator of K+ conductance, C-terminal domain"/>
    <property type="match status" value="2"/>
</dbReference>
<dbReference type="InterPro" id="IPR004680">
    <property type="entry name" value="Cit_transptr-like_dom"/>
</dbReference>
<dbReference type="InterPro" id="IPR051679">
    <property type="entry name" value="DASS-Related_Transporters"/>
</dbReference>
<dbReference type="InterPro" id="IPR031312">
    <property type="entry name" value="Na/sul_symport_CS"/>
</dbReference>
<dbReference type="InterPro" id="IPR006037">
    <property type="entry name" value="RCK_C"/>
</dbReference>
<dbReference type="InterPro" id="IPR036721">
    <property type="entry name" value="RCK_C_sf"/>
</dbReference>
<dbReference type="PANTHER" id="PTHR43652">
    <property type="entry name" value="BASIC AMINO ACID ANTIPORTER YFCC-RELATED"/>
    <property type="match status" value="1"/>
</dbReference>
<dbReference type="PANTHER" id="PTHR43652:SF2">
    <property type="entry name" value="BASIC AMINO ACID ANTIPORTER YFCC-RELATED"/>
    <property type="match status" value="1"/>
</dbReference>
<dbReference type="Pfam" id="PF03600">
    <property type="entry name" value="CitMHS"/>
    <property type="match status" value="1"/>
</dbReference>
<dbReference type="Pfam" id="PF02080">
    <property type="entry name" value="TrkA_C"/>
    <property type="match status" value="2"/>
</dbReference>
<dbReference type="SUPFAM" id="SSF116726">
    <property type="entry name" value="TrkA C-terminal domain-like"/>
    <property type="match status" value="2"/>
</dbReference>
<dbReference type="PROSITE" id="PS01271">
    <property type="entry name" value="NA_SULFATE"/>
    <property type="match status" value="1"/>
</dbReference>
<dbReference type="PROSITE" id="PS51202">
    <property type="entry name" value="RCK_C"/>
    <property type="match status" value="2"/>
</dbReference>
<name>Y640_SYNY3</name>
<reference key="1">
    <citation type="journal article" date="1996" name="DNA Res.">
        <title>Sequence analysis of the genome of the unicellular cyanobacterium Synechocystis sp. strain PCC6803. II. Sequence determination of the entire genome and assignment of potential protein-coding regions.</title>
        <authorList>
            <person name="Kaneko T."/>
            <person name="Sato S."/>
            <person name="Kotani H."/>
            <person name="Tanaka A."/>
            <person name="Asamizu E."/>
            <person name="Nakamura Y."/>
            <person name="Miyajima N."/>
            <person name="Hirosawa M."/>
            <person name="Sugiura M."/>
            <person name="Sasamoto S."/>
            <person name="Kimura T."/>
            <person name="Hosouchi T."/>
            <person name="Matsuno A."/>
            <person name="Muraki A."/>
            <person name="Nakazaki N."/>
            <person name="Naruo K."/>
            <person name="Okumura S."/>
            <person name="Shimpo S."/>
            <person name="Takeuchi C."/>
            <person name="Wada T."/>
            <person name="Watanabe A."/>
            <person name="Yamada M."/>
            <person name="Yasuda M."/>
            <person name="Tabata S."/>
        </authorList>
    </citation>
    <scope>NUCLEOTIDE SEQUENCE [LARGE SCALE GENOMIC DNA]</scope>
    <source>
        <strain>ATCC 27184 / PCC 6803 / Kazusa</strain>
    </source>
</reference>
<keyword id="KW-1003">Cell membrane</keyword>
<keyword id="KW-0472">Membrane</keyword>
<keyword id="KW-1185">Reference proteome</keyword>
<keyword id="KW-0677">Repeat</keyword>
<keyword id="KW-0812">Transmembrane</keyword>
<keyword id="KW-1133">Transmembrane helix</keyword>
<keyword id="KW-0813">Transport</keyword>
<comment type="subcellular location">
    <subcellularLocation>
        <location evidence="3">Cell membrane</location>
        <topology evidence="3">Multi-pass membrane protein</topology>
    </subcellularLocation>
</comment>
<comment type="similarity">
    <text evidence="3">Belongs to the SLC13A/DASS transporter (TC 2.A.47) family. NADC subfamily.</text>
</comment>
<accession>P72958</accession>
<organism>
    <name type="scientific">Synechocystis sp. (strain ATCC 27184 / PCC 6803 / Kazusa)</name>
    <dbReference type="NCBI Taxonomy" id="1111708"/>
    <lineage>
        <taxon>Bacteria</taxon>
        <taxon>Bacillati</taxon>
        <taxon>Cyanobacteriota</taxon>
        <taxon>Cyanophyceae</taxon>
        <taxon>Synechococcales</taxon>
        <taxon>Merismopediaceae</taxon>
        <taxon>Synechocystis</taxon>
    </lineage>
</organism>
<gene>
    <name type="ordered locus">sll0640</name>
</gene>
<evidence type="ECO:0000255" key="1"/>
<evidence type="ECO:0000255" key="2">
    <source>
        <dbReference type="PROSITE-ProRule" id="PRU00544"/>
    </source>
</evidence>
<evidence type="ECO:0000305" key="3"/>
<sequence>MAFLQTWLADYQIPLTLAVIVFALVMFVLEWLPIDTTAILVAVILMVLGLVTPTEGIAGFSNSATVTIMAMFILSYGITRTGIIQIIRDSLIKFGGDSLRRQLLLMGFIVGPSSAFLNNTAIVAIFLPIIEEWARQRQISVSKLLIPLSYATILGGMITLLGTSTNILASGLAEKLTGQGFSIFQFTPLGLLTFSVGLIYIVLAAPILLPARRNISDGNVAAEYQIKDYVSEIIIPPRSSLIGQTLRQSEIQRKFDIDVLEIIHNDTHFPQPLADRVLTMGDILLVRAGREDLLRIKDERGIEILADVQFVSAETNNAGPLESSEEKVAEVLILSNSRLIGSTLKDLRFRQRYNATVIAIRRGEELIRQRLGKVRLKFGDLLLLQGPRESFLGLQTTRELLVLEEKPLDNLRLDKAKTAIAIVALVIVIAGLDILPISVTSWAGVMAMVISGCLKPGEIYGAIRWDVIFLLAGLIPLGTAMENSGTTAWFASFLADAGGHLSGYALLLLFYLATALLTEILSNNATVVLMLPIAFQVAQSLGLNPLAFMFVVTFAASNSFMSPIGYQTNTMVYGPGGYRFTDFARIGAPLTVILTLATPLLVMLIYGVQPTN</sequence>
<proteinExistence type="inferred from homology"/>
<protein>
    <recommendedName>
        <fullName>Uncharacterized transporter sll0640</fullName>
    </recommendedName>
</protein>